<keyword id="KW-1185">Reference proteome</keyword>
<gene>
    <name evidence="1" type="primary">clpS</name>
    <name type="ordered locus">E2348C_0878</name>
</gene>
<name>CLPS_ECO27</name>
<evidence type="ECO:0000255" key="1">
    <source>
        <dbReference type="HAMAP-Rule" id="MF_00302"/>
    </source>
</evidence>
<dbReference type="EMBL" id="FM180568">
    <property type="protein sequence ID" value="CAS08426.1"/>
    <property type="molecule type" value="Genomic_DNA"/>
</dbReference>
<dbReference type="RefSeq" id="WP_000520792.1">
    <property type="nucleotide sequence ID" value="NC_011601.1"/>
</dbReference>
<dbReference type="SMR" id="B7UMX3"/>
<dbReference type="KEGG" id="ecg:E2348C_0878"/>
<dbReference type="HOGENOM" id="CLU_134358_2_1_6"/>
<dbReference type="Proteomes" id="UP000008205">
    <property type="component" value="Chromosome"/>
</dbReference>
<dbReference type="GO" id="GO:0030163">
    <property type="term" value="P:protein catabolic process"/>
    <property type="evidence" value="ECO:0007669"/>
    <property type="project" value="InterPro"/>
</dbReference>
<dbReference type="GO" id="GO:0006508">
    <property type="term" value="P:proteolysis"/>
    <property type="evidence" value="ECO:0007669"/>
    <property type="project" value="UniProtKB-UniRule"/>
</dbReference>
<dbReference type="FunFam" id="3.30.1390.10:FF:000002">
    <property type="entry name" value="ATP-dependent Clp protease adapter protein ClpS"/>
    <property type="match status" value="1"/>
</dbReference>
<dbReference type="Gene3D" id="3.30.1390.10">
    <property type="match status" value="1"/>
</dbReference>
<dbReference type="HAMAP" id="MF_00302">
    <property type="entry name" value="ClpS"/>
    <property type="match status" value="1"/>
</dbReference>
<dbReference type="InterPro" id="IPR022935">
    <property type="entry name" value="ClpS"/>
</dbReference>
<dbReference type="InterPro" id="IPR003769">
    <property type="entry name" value="ClpS_core"/>
</dbReference>
<dbReference type="InterPro" id="IPR014719">
    <property type="entry name" value="Ribosomal_bL12_C/ClpS-like"/>
</dbReference>
<dbReference type="NCBIfam" id="NF000670">
    <property type="entry name" value="PRK00033.1-3"/>
    <property type="match status" value="1"/>
</dbReference>
<dbReference type="NCBIfam" id="NF000672">
    <property type="entry name" value="PRK00033.1-5"/>
    <property type="match status" value="1"/>
</dbReference>
<dbReference type="PANTHER" id="PTHR33473:SF19">
    <property type="entry name" value="ATP-DEPENDENT CLP PROTEASE ADAPTER PROTEIN CLPS"/>
    <property type="match status" value="1"/>
</dbReference>
<dbReference type="PANTHER" id="PTHR33473">
    <property type="entry name" value="ATP-DEPENDENT CLP PROTEASE ADAPTER PROTEIN CLPS1, CHLOROPLASTIC"/>
    <property type="match status" value="1"/>
</dbReference>
<dbReference type="Pfam" id="PF02617">
    <property type="entry name" value="ClpS"/>
    <property type="match status" value="1"/>
</dbReference>
<dbReference type="SUPFAM" id="SSF54736">
    <property type="entry name" value="ClpS-like"/>
    <property type="match status" value="1"/>
</dbReference>
<comment type="function">
    <text evidence="1">Involved in the modulation of the specificity of the ClpAP-mediated ATP-dependent protein degradation.</text>
</comment>
<comment type="subunit">
    <text evidence="1">Binds to the N-terminal domain of the chaperone ClpA.</text>
</comment>
<comment type="similarity">
    <text evidence="1">Belongs to the ClpS family.</text>
</comment>
<protein>
    <recommendedName>
        <fullName evidence="1">ATP-dependent Clp protease adapter protein ClpS</fullName>
    </recommendedName>
</protein>
<accession>B7UMX3</accession>
<organism>
    <name type="scientific">Escherichia coli O127:H6 (strain E2348/69 / EPEC)</name>
    <dbReference type="NCBI Taxonomy" id="574521"/>
    <lineage>
        <taxon>Bacteria</taxon>
        <taxon>Pseudomonadati</taxon>
        <taxon>Pseudomonadota</taxon>
        <taxon>Gammaproteobacteria</taxon>
        <taxon>Enterobacterales</taxon>
        <taxon>Enterobacteriaceae</taxon>
        <taxon>Escherichia</taxon>
    </lineage>
</organism>
<reference key="1">
    <citation type="journal article" date="2009" name="J. Bacteriol.">
        <title>Complete genome sequence and comparative genome analysis of enteropathogenic Escherichia coli O127:H6 strain E2348/69.</title>
        <authorList>
            <person name="Iguchi A."/>
            <person name="Thomson N.R."/>
            <person name="Ogura Y."/>
            <person name="Saunders D."/>
            <person name="Ooka T."/>
            <person name="Henderson I.R."/>
            <person name="Harris D."/>
            <person name="Asadulghani M."/>
            <person name="Kurokawa K."/>
            <person name="Dean P."/>
            <person name="Kenny B."/>
            <person name="Quail M.A."/>
            <person name="Thurston S."/>
            <person name="Dougan G."/>
            <person name="Hayashi T."/>
            <person name="Parkhill J."/>
            <person name="Frankel G."/>
        </authorList>
    </citation>
    <scope>NUCLEOTIDE SEQUENCE [LARGE SCALE GENOMIC DNA]</scope>
    <source>
        <strain>E2348/69 / EPEC</strain>
    </source>
</reference>
<proteinExistence type="inferred from homology"/>
<sequence>MGKTNDWLDFEQLAEEKVRDALKPPSMYKVILVNDDYTPMEFVIDVLQKFFSYDVERATQLMLAVHYQGKAICGVFTAEVAETKVAMVNKYARENEHPLLCTLEKA</sequence>
<feature type="chain" id="PRO_1000132807" description="ATP-dependent Clp protease adapter protein ClpS">
    <location>
        <begin position="1"/>
        <end position="106"/>
    </location>
</feature>